<gene>
    <name evidence="1" type="primary">glyA</name>
    <name type="ordered locus">GbCGDNIH1_1008</name>
</gene>
<reference key="1">
    <citation type="journal article" date="2007" name="J. Bacteriol.">
        <title>Genome sequence analysis of the emerging human pathogenic acetic acid bacterium Granulibacter bethesdensis.</title>
        <authorList>
            <person name="Greenberg D.E."/>
            <person name="Porcella S.F."/>
            <person name="Zelazny A.M."/>
            <person name="Virtaneva K."/>
            <person name="Sturdevant D.E."/>
            <person name="Kupko J.J. III"/>
            <person name="Barbian K.D."/>
            <person name="Babar A."/>
            <person name="Dorward D.W."/>
            <person name="Holland S.M."/>
        </authorList>
    </citation>
    <scope>NUCLEOTIDE SEQUENCE [LARGE SCALE GENOMIC DNA]</scope>
    <source>
        <strain>ATCC BAA-1260 / CGDNIH1</strain>
    </source>
</reference>
<name>GLYA_GRABC</name>
<feature type="chain" id="PRO_0000369926" description="Serine hydroxymethyltransferase">
    <location>
        <begin position="1"/>
        <end position="431"/>
    </location>
</feature>
<feature type="binding site" evidence="1">
    <location>
        <position position="127"/>
    </location>
    <ligand>
        <name>(6S)-5,6,7,8-tetrahydrofolate</name>
        <dbReference type="ChEBI" id="CHEBI:57453"/>
    </ligand>
</feature>
<feature type="binding site" evidence="1">
    <location>
        <begin position="131"/>
        <end position="133"/>
    </location>
    <ligand>
        <name>(6S)-5,6,7,8-tetrahydrofolate</name>
        <dbReference type="ChEBI" id="CHEBI:57453"/>
    </ligand>
</feature>
<feature type="site" description="Plays an important role in substrate specificity" evidence="1">
    <location>
        <position position="235"/>
    </location>
</feature>
<feature type="modified residue" description="N6-(pyridoxal phosphate)lysine" evidence="1">
    <location>
        <position position="236"/>
    </location>
</feature>
<accession>Q0BTE6</accession>
<organism>
    <name type="scientific">Granulibacter bethesdensis (strain ATCC BAA-1260 / CGDNIH1)</name>
    <dbReference type="NCBI Taxonomy" id="391165"/>
    <lineage>
        <taxon>Bacteria</taxon>
        <taxon>Pseudomonadati</taxon>
        <taxon>Pseudomonadota</taxon>
        <taxon>Alphaproteobacteria</taxon>
        <taxon>Acetobacterales</taxon>
        <taxon>Acetobacteraceae</taxon>
        <taxon>Granulibacter</taxon>
    </lineage>
</organism>
<comment type="function">
    <text evidence="1">Catalyzes the reversible interconversion of serine and glycine with tetrahydrofolate (THF) serving as the one-carbon carrier. This reaction serves as the major source of one-carbon groups required for the biosynthesis of purines, thymidylate, methionine, and other important biomolecules. Also exhibits THF-independent aldolase activity toward beta-hydroxyamino acids, producing glycine and aldehydes, via a retro-aldol mechanism.</text>
</comment>
<comment type="catalytic activity">
    <reaction evidence="1">
        <text>(6R)-5,10-methylene-5,6,7,8-tetrahydrofolate + glycine + H2O = (6S)-5,6,7,8-tetrahydrofolate + L-serine</text>
        <dbReference type="Rhea" id="RHEA:15481"/>
        <dbReference type="ChEBI" id="CHEBI:15377"/>
        <dbReference type="ChEBI" id="CHEBI:15636"/>
        <dbReference type="ChEBI" id="CHEBI:33384"/>
        <dbReference type="ChEBI" id="CHEBI:57305"/>
        <dbReference type="ChEBI" id="CHEBI:57453"/>
        <dbReference type="EC" id="2.1.2.1"/>
    </reaction>
</comment>
<comment type="cofactor">
    <cofactor evidence="1">
        <name>pyridoxal 5'-phosphate</name>
        <dbReference type="ChEBI" id="CHEBI:597326"/>
    </cofactor>
</comment>
<comment type="pathway">
    <text evidence="1">One-carbon metabolism; tetrahydrofolate interconversion.</text>
</comment>
<comment type="pathway">
    <text evidence="1">Amino-acid biosynthesis; glycine biosynthesis; glycine from L-serine: step 1/1.</text>
</comment>
<comment type="subunit">
    <text evidence="1">Homodimer.</text>
</comment>
<comment type="subcellular location">
    <subcellularLocation>
        <location evidence="1">Cytoplasm</location>
    </subcellularLocation>
</comment>
<comment type="similarity">
    <text evidence="1">Belongs to the SHMT family.</text>
</comment>
<keyword id="KW-0028">Amino-acid biosynthesis</keyword>
<keyword id="KW-0963">Cytoplasm</keyword>
<keyword id="KW-0554">One-carbon metabolism</keyword>
<keyword id="KW-0663">Pyridoxal phosphate</keyword>
<keyword id="KW-1185">Reference proteome</keyword>
<keyword id="KW-0808">Transferase</keyword>
<protein>
    <recommendedName>
        <fullName evidence="1">Serine hydroxymethyltransferase</fullName>
        <shortName evidence="1">SHMT</shortName>
        <shortName evidence="1">Serine methylase</shortName>
        <ecNumber evidence="1">2.1.2.1</ecNumber>
    </recommendedName>
</protein>
<dbReference type="EC" id="2.1.2.1" evidence="1"/>
<dbReference type="EMBL" id="CP000394">
    <property type="protein sequence ID" value="ABI61906.1"/>
    <property type="molecule type" value="Genomic_DNA"/>
</dbReference>
<dbReference type="RefSeq" id="WP_011631715.1">
    <property type="nucleotide sequence ID" value="NC_008343.2"/>
</dbReference>
<dbReference type="SMR" id="Q0BTE6"/>
<dbReference type="STRING" id="391165.GbCGDNIH1_1008"/>
<dbReference type="GeneID" id="69745267"/>
<dbReference type="KEGG" id="gbe:GbCGDNIH1_1008"/>
<dbReference type="eggNOG" id="COG0112">
    <property type="taxonomic scope" value="Bacteria"/>
</dbReference>
<dbReference type="HOGENOM" id="CLU_022477_2_0_5"/>
<dbReference type="OrthoDB" id="9803846at2"/>
<dbReference type="UniPathway" id="UPA00193"/>
<dbReference type="UniPathway" id="UPA00288">
    <property type="reaction ID" value="UER01023"/>
</dbReference>
<dbReference type="Proteomes" id="UP000001963">
    <property type="component" value="Chromosome"/>
</dbReference>
<dbReference type="GO" id="GO:0005829">
    <property type="term" value="C:cytosol"/>
    <property type="evidence" value="ECO:0007669"/>
    <property type="project" value="TreeGrafter"/>
</dbReference>
<dbReference type="GO" id="GO:0004372">
    <property type="term" value="F:glycine hydroxymethyltransferase activity"/>
    <property type="evidence" value="ECO:0007669"/>
    <property type="project" value="UniProtKB-UniRule"/>
</dbReference>
<dbReference type="GO" id="GO:0030170">
    <property type="term" value="F:pyridoxal phosphate binding"/>
    <property type="evidence" value="ECO:0007669"/>
    <property type="project" value="UniProtKB-UniRule"/>
</dbReference>
<dbReference type="GO" id="GO:0019264">
    <property type="term" value="P:glycine biosynthetic process from serine"/>
    <property type="evidence" value="ECO:0007669"/>
    <property type="project" value="UniProtKB-UniRule"/>
</dbReference>
<dbReference type="GO" id="GO:0035999">
    <property type="term" value="P:tetrahydrofolate interconversion"/>
    <property type="evidence" value="ECO:0007669"/>
    <property type="project" value="UniProtKB-UniRule"/>
</dbReference>
<dbReference type="CDD" id="cd00378">
    <property type="entry name" value="SHMT"/>
    <property type="match status" value="1"/>
</dbReference>
<dbReference type="FunFam" id="3.40.640.10:FF:000001">
    <property type="entry name" value="Serine hydroxymethyltransferase"/>
    <property type="match status" value="1"/>
</dbReference>
<dbReference type="Gene3D" id="3.90.1150.10">
    <property type="entry name" value="Aspartate Aminotransferase, domain 1"/>
    <property type="match status" value="1"/>
</dbReference>
<dbReference type="Gene3D" id="3.40.640.10">
    <property type="entry name" value="Type I PLP-dependent aspartate aminotransferase-like (Major domain)"/>
    <property type="match status" value="1"/>
</dbReference>
<dbReference type="HAMAP" id="MF_00051">
    <property type="entry name" value="SHMT"/>
    <property type="match status" value="1"/>
</dbReference>
<dbReference type="InterPro" id="IPR015424">
    <property type="entry name" value="PyrdxlP-dep_Trfase"/>
</dbReference>
<dbReference type="InterPro" id="IPR015421">
    <property type="entry name" value="PyrdxlP-dep_Trfase_major"/>
</dbReference>
<dbReference type="InterPro" id="IPR015422">
    <property type="entry name" value="PyrdxlP-dep_Trfase_small"/>
</dbReference>
<dbReference type="InterPro" id="IPR001085">
    <property type="entry name" value="Ser_HO-MeTrfase"/>
</dbReference>
<dbReference type="InterPro" id="IPR049943">
    <property type="entry name" value="Ser_HO-MeTrfase-like"/>
</dbReference>
<dbReference type="InterPro" id="IPR019798">
    <property type="entry name" value="Ser_HO-MeTrfase_PLP_BS"/>
</dbReference>
<dbReference type="InterPro" id="IPR039429">
    <property type="entry name" value="SHMT-like_dom"/>
</dbReference>
<dbReference type="NCBIfam" id="NF000586">
    <property type="entry name" value="PRK00011.1"/>
    <property type="match status" value="1"/>
</dbReference>
<dbReference type="PANTHER" id="PTHR11680">
    <property type="entry name" value="SERINE HYDROXYMETHYLTRANSFERASE"/>
    <property type="match status" value="1"/>
</dbReference>
<dbReference type="PANTHER" id="PTHR11680:SF35">
    <property type="entry name" value="SERINE HYDROXYMETHYLTRANSFERASE 1"/>
    <property type="match status" value="1"/>
</dbReference>
<dbReference type="Pfam" id="PF00464">
    <property type="entry name" value="SHMT"/>
    <property type="match status" value="1"/>
</dbReference>
<dbReference type="PIRSF" id="PIRSF000412">
    <property type="entry name" value="SHMT"/>
    <property type="match status" value="1"/>
</dbReference>
<dbReference type="SUPFAM" id="SSF53383">
    <property type="entry name" value="PLP-dependent transferases"/>
    <property type="match status" value="1"/>
</dbReference>
<dbReference type="PROSITE" id="PS00096">
    <property type="entry name" value="SHMT"/>
    <property type="match status" value="1"/>
</dbReference>
<sequence>MSASALDAFFGARLADTDPDLFAALEKEFHRQEDGIELIASENIVSAAVLEAQGSVLTNKYAEGYPGKRYYGGCAAVDIAEQLAIDRAKQLFGCEFANVQPHSGAQANGAVFFALAKPGDTILGMSLAAGGHLTHGAAPTVSGKWFNAVQYGVRKEDGLLDYEELEALAREHKPKIIIAGGSAYPRFIDFPRIRKVADEVGAYFMVDMAHFAGLVAAGIYPSPLPHAHVVTTTTHKTLRGPRGGMILTNDLELGKKFNTAVFPGLQGGPLMHVIAAKAVAFGEALKPDFKTYQQSVANNAKVLASTLVERGLAIVSGGTDTHLMLVDLRPKNVTGKATDESLGRAHITTNKNAIPFDPQKPAVTSGIRLGTPAGTSRGFGEAEFREIGLMIDRVVEGLSKAGENGSNEAVEQEVGAEVKALCKRFPLYRNH</sequence>
<evidence type="ECO:0000255" key="1">
    <source>
        <dbReference type="HAMAP-Rule" id="MF_00051"/>
    </source>
</evidence>
<proteinExistence type="inferred from homology"/>